<name>RNZ_BACSU</name>
<gene>
    <name evidence="1" type="primary">rnz</name>
    <name type="synonym">yqjK</name>
    <name type="ordered locus">BSU23840</name>
</gene>
<proteinExistence type="evidence at protein level"/>
<dbReference type="EC" id="3.1.26.11" evidence="1 2"/>
<dbReference type="EMBL" id="D84432">
    <property type="protein sequence ID" value="BAA12617.1"/>
    <property type="molecule type" value="Genomic_DNA"/>
</dbReference>
<dbReference type="EMBL" id="AL009126">
    <property type="protein sequence ID" value="CAB14316.1"/>
    <property type="molecule type" value="Genomic_DNA"/>
</dbReference>
<dbReference type="PIR" id="C69964">
    <property type="entry name" value="C69964"/>
</dbReference>
<dbReference type="RefSeq" id="NP_390265.1">
    <property type="nucleotide sequence ID" value="NC_000964.3"/>
</dbReference>
<dbReference type="RefSeq" id="WP_004398681.1">
    <property type="nucleotide sequence ID" value="NZ_OZ025638.1"/>
</dbReference>
<dbReference type="PDB" id="1Y44">
    <property type="method" value="X-ray"/>
    <property type="resolution" value="2.10 A"/>
    <property type="chains" value="A/B=1-307"/>
</dbReference>
<dbReference type="PDB" id="2FK6">
    <property type="method" value="X-ray"/>
    <property type="resolution" value="2.90 A"/>
    <property type="chains" value="A=1-307"/>
</dbReference>
<dbReference type="PDB" id="4GCW">
    <property type="method" value="X-ray"/>
    <property type="resolution" value="3.00 A"/>
    <property type="chains" value="A=1-307"/>
</dbReference>
<dbReference type="PDBsum" id="1Y44"/>
<dbReference type="PDBsum" id="2FK6"/>
<dbReference type="PDBsum" id="4GCW"/>
<dbReference type="SMR" id="P54548"/>
<dbReference type="DIP" id="DIP-29070N"/>
<dbReference type="FunCoup" id="P54548">
    <property type="interactions" value="554"/>
</dbReference>
<dbReference type="STRING" id="224308.BSU23840"/>
<dbReference type="DrugBank" id="DB03814">
    <property type="generic name" value="2-(N-morpholino)ethanesulfonic acid"/>
</dbReference>
<dbReference type="PaxDb" id="224308-BSU23840"/>
<dbReference type="EnsemblBacteria" id="CAB14316">
    <property type="protein sequence ID" value="CAB14316"/>
    <property type="gene ID" value="BSU_23840"/>
</dbReference>
<dbReference type="GeneID" id="938694"/>
<dbReference type="KEGG" id="bsu:BSU23840"/>
<dbReference type="PATRIC" id="fig|224308.179.peg.2597"/>
<dbReference type="eggNOG" id="COG1234">
    <property type="taxonomic scope" value="Bacteria"/>
</dbReference>
<dbReference type="InParanoid" id="P54548"/>
<dbReference type="OrthoDB" id="9800940at2"/>
<dbReference type="PhylomeDB" id="P54548"/>
<dbReference type="BioCyc" id="BSUB:BSU23840-MONOMER"/>
<dbReference type="BRENDA" id="3.1.26.11">
    <property type="organism ID" value="658"/>
</dbReference>
<dbReference type="EvolutionaryTrace" id="P54548"/>
<dbReference type="Proteomes" id="UP000001570">
    <property type="component" value="Chromosome"/>
</dbReference>
<dbReference type="GO" id="GO:0042781">
    <property type="term" value="F:3'-tRNA processing endoribonuclease activity"/>
    <property type="evidence" value="ECO:0000318"/>
    <property type="project" value="GO_Central"/>
</dbReference>
<dbReference type="GO" id="GO:0042802">
    <property type="term" value="F:identical protein binding"/>
    <property type="evidence" value="ECO:0000353"/>
    <property type="project" value="IntAct"/>
</dbReference>
<dbReference type="GO" id="GO:0008270">
    <property type="term" value="F:zinc ion binding"/>
    <property type="evidence" value="ECO:0007669"/>
    <property type="project" value="UniProtKB-UniRule"/>
</dbReference>
<dbReference type="CDD" id="cd07717">
    <property type="entry name" value="RNaseZ_ZiPD-like_MBL-fold"/>
    <property type="match status" value="1"/>
</dbReference>
<dbReference type="FunFam" id="3.60.15.10:FF:000002">
    <property type="entry name" value="Ribonuclease Z"/>
    <property type="match status" value="1"/>
</dbReference>
<dbReference type="Gene3D" id="3.60.15.10">
    <property type="entry name" value="Ribonuclease Z/Hydroxyacylglutathione hydrolase-like"/>
    <property type="match status" value="1"/>
</dbReference>
<dbReference type="HAMAP" id="MF_01818">
    <property type="entry name" value="RNase_Z_BN"/>
    <property type="match status" value="1"/>
</dbReference>
<dbReference type="InterPro" id="IPR001279">
    <property type="entry name" value="Metallo-B-lactamas"/>
</dbReference>
<dbReference type="InterPro" id="IPR036866">
    <property type="entry name" value="RibonucZ/Hydroxyglut_hydro"/>
</dbReference>
<dbReference type="InterPro" id="IPR013471">
    <property type="entry name" value="RNase_Z/BN"/>
</dbReference>
<dbReference type="NCBIfam" id="NF000801">
    <property type="entry name" value="PRK00055.1-3"/>
    <property type="match status" value="1"/>
</dbReference>
<dbReference type="NCBIfam" id="TIGR02651">
    <property type="entry name" value="RNase_Z"/>
    <property type="match status" value="1"/>
</dbReference>
<dbReference type="PANTHER" id="PTHR46018">
    <property type="entry name" value="ZINC PHOSPHODIESTERASE ELAC PROTEIN 1"/>
    <property type="match status" value="1"/>
</dbReference>
<dbReference type="PANTHER" id="PTHR46018:SF2">
    <property type="entry name" value="ZINC PHOSPHODIESTERASE ELAC PROTEIN 1"/>
    <property type="match status" value="1"/>
</dbReference>
<dbReference type="Pfam" id="PF12706">
    <property type="entry name" value="Lactamase_B_2"/>
    <property type="match status" value="2"/>
</dbReference>
<dbReference type="SMART" id="SM00849">
    <property type="entry name" value="Lactamase_B"/>
    <property type="match status" value="1"/>
</dbReference>
<dbReference type="SUPFAM" id="SSF56281">
    <property type="entry name" value="Metallo-hydrolase/oxidoreductase"/>
    <property type="match status" value="1"/>
</dbReference>
<feature type="chain" id="PRO_0000155849" description="Ribonuclease Z">
    <location>
        <begin position="1"/>
        <end position="307"/>
    </location>
</feature>
<feature type="active site" description="Proton acceptor" evidence="1 5">
    <location>
        <position position="67"/>
    </location>
</feature>
<feature type="binding site" evidence="1 3">
    <location>
        <position position="63"/>
    </location>
    <ligand>
        <name>Zn(2+)</name>
        <dbReference type="ChEBI" id="CHEBI:29105"/>
        <label>1</label>
        <note>catalytic</note>
    </ligand>
</feature>
<feature type="binding site" evidence="1 3">
    <location>
        <position position="65"/>
    </location>
    <ligand>
        <name>Zn(2+)</name>
        <dbReference type="ChEBI" id="CHEBI:29105"/>
        <label>1</label>
        <note>catalytic</note>
    </ligand>
</feature>
<feature type="binding site" evidence="1 3 4">
    <location>
        <position position="67"/>
    </location>
    <ligand>
        <name>Zn(2+)</name>
        <dbReference type="ChEBI" id="CHEBI:29105"/>
        <label>2</label>
        <note>catalytic</note>
    </ligand>
</feature>
<feature type="binding site" evidence="1 3 4">
    <location>
        <position position="68"/>
    </location>
    <ligand>
        <name>Zn(2+)</name>
        <dbReference type="ChEBI" id="CHEBI:29105"/>
        <label>2</label>
        <note>catalytic</note>
    </ligand>
</feature>
<feature type="binding site" evidence="1 3">
    <location>
        <position position="140"/>
    </location>
    <ligand>
        <name>Zn(2+)</name>
        <dbReference type="ChEBI" id="CHEBI:29105"/>
        <label>1</label>
        <note>catalytic</note>
    </ligand>
</feature>
<feature type="binding site" evidence="1 3">
    <location>
        <position position="211"/>
    </location>
    <ligand>
        <name>Zn(2+)</name>
        <dbReference type="ChEBI" id="CHEBI:29105"/>
        <label>1</label>
        <note>catalytic</note>
    </ligand>
</feature>
<feature type="binding site" evidence="1 3 4">
    <location>
        <position position="211"/>
    </location>
    <ligand>
        <name>Zn(2+)</name>
        <dbReference type="ChEBI" id="CHEBI:29105"/>
        <label>2</label>
        <note>catalytic</note>
    </ligand>
</feature>
<feature type="binding site" evidence="1 3 4">
    <location>
        <position position="269"/>
    </location>
    <ligand>
        <name>Zn(2+)</name>
        <dbReference type="ChEBI" id="CHEBI:29105"/>
        <label>2</label>
        <note>catalytic</note>
    </ligand>
</feature>
<feature type="strand" evidence="6">
    <location>
        <begin position="2"/>
        <end position="7"/>
    </location>
</feature>
<feature type="strand" evidence="6">
    <location>
        <begin position="9"/>
        <end position="12"/>
    </location>
</feature>
<feature type="strand" evidence="6">
    <location>
        <begin position="21"/>
        <end position="25"/>
    </location>
</feature>
<feature type="turn" evidence="6">
    <location>
        <begin position="27"/>
        <end position="30"/>
    </location>
</feature>
<feature type="strand" evidence="6">
    <location>
        <begin position="31"/>
        <end position="36"/>
    </location>
</feature>
<feature type="helix" evidence="6">
    <location>
        <begin position="42"/>
        <end position="46"/>
    </location>
</feature>
<feature type="helix" evidence="6">
    <location>
        <begin position="53"/>
        <end position="55"/>
    </location>
</feature>
<feature type="strand" evidence="6">
    <location>
        <begin position="56"/>
        <end position="60"/>
    </location>
</feature>
<feature type="helix" evidence="6">
    <location>
        <begin position="66"/>
        <end position="68"/>
    </location>
</feature>
<feature type="turn" evidence="6">
    <location>
        <begin position="69"/>
        <end position="71"/>
    </location>
</feature>
<feature type="helix" evidence="6">
    <location>
        <begin position="72"/>
        <end position="81"/>
    </location>
</feature>
<feature type="strand" evidence="6">
    <location>
        <begin position="88"/>
        <end position="93"/>
    </location>
</feature>
<feature type="helix" evidence="6">
    <location>
        <begin position="96"/>
        <end position="106"/>
    </location>
</feature>
<feature type="strand" evidence="6">
    <location>
        <begin position="115"/>
        <end position="119"/>
    </location>
</feature>
<feature type="strand" evidence="6">
    <location>
        <begin position="122"/>
        <end position="127"/>
    </location>
</feature>
<feature type="strand" evidence="6">
    <location>
        <begin position="129"/>
        <end position="137"/>
    </location>
</feature>
<feature type="strand" evidence="6">
    <location>
        <begin position="139"/>
        <end position="151"/>
    </location>
</feature>
<feature type="helix" evidence="6">
    <location>
        <begin position="160"/>
        <end position="165"/>
    </location>
</feature>
<feature type="helix" evidence="6">
    <location>
        <begin position="172"/>
        <end position="178"/>
    </location>
</feature>
<feature type="strand" evidence="6">
    <location>
        <begin position="182"/>
        <end position="184"/>
    </location>
</feature>
<feature type="strand" evidence="6">
    <location>
        <begin position="190"/>
        <end position="192"/>
    </location>
</feature>
<feature type="helix" evidence="6">
    <location>
        <begin position="193"/>
        <end position="196"/>
    </location>
</feature>
<feature type="strand" evidence="6">
    <location>
        <begin position="205"/>
        <end position="208"/>
    </location>
</feature>
<feature type="helix" evidence="6">
    <location>
        <begin position="216"/>
        <end position="221"/>
    </location>
</feature>
<feature type="turn" evidence="6">
    <location>
        <begin position="222"/>
        <end position="224"/>
    </location>
</feature>
<feature type="strand" evidence="6">
    <location>
        <begin position="226"/>
        <end position="231"/>
    </location>
</feature>
<feature type="helix" evidence="6">
    <location>
        <begin position="239"/>
        <end position="244"/>
    </location>
</feature>
<feature type="helix" evidence="6">
    <location>
        <begin position="250"/>
        <end position="260"/>
    </location>
</feature>
<feature type="strand" evidence="6">
    <location>
        <begin position="263"/>
        <end position="268"/>
    </location>
</feature>
<feature type="helix" evidence="6">
    <location>
        <begin position="278"/>
        <end position="289"/>
    </location>
</feature>
<feature type="strand" evidence="6">
    <location>
        <begin position="291"/>
        <end position="295"/>
    </location>
</feature>
<feature type="strand" evidence="6">
    <location>
        <begin position="301"/>
        <end position="303"/>
    </location>
</feature>
<comment type="function">
    <text evidence="1 2">Zinc phosphodiesterase, which displays some tRNA 3'-processing endonuclease activity. Probably involved in tRNA maturation, by removing a 3'-trailer from precursor tRNA.</text>
</comment>
<comment type="catalytic activity">
    <reaction evidence="1 2">
        <text>Endonucleolytic cleavage of RNA, removing extra 3' nucleotides from tRNA precursor, generating 3' termini of tRNAs. A 3'-hydroxy group is left at the tRNA terminus and a 5'-phosphoryl group is left at the trailer molecule.</text>
        <dbReference type="EC" id="3.1.26.11"/>
    </reaction>
</comment>
<comment type="cofactor">
    <cofactor evidence="3 4">
        <name>Zn(2+)</name>
        <dbReference type="ChEBI" id="CHEBI:29105"/>
    </cofactor>
    <text evidence="3">Binds 2 Zn(2+) ions.</text>
</comment>
<comment type="subunit">
    <text evidence="1 3 4">Homodimer.</text>
</comment>
<comment type="interaction">
    <interactant intactId="EBI-15572938">
        <id>P54548</id>
    </interactant>
    <interactant intactId="EBI-15572938">
        <id>P54548</id>
        <label>rnz</label>
    </interactant>
    <organismsDiffer>false</organismsDiffer>
    <experiments>2</experiments>
</comment>
<comment type="similarity">
    <text evidence="1">Belongs to the RNase Z family.</text>
</comment>
<reference key="1">
    <citation type="journal article" date="1996" name="Microbiology">
        <title>Systematic sequencing of the 283 kb 210 degrees-232 degrees region of the Bacillus subtilis genome containing the skin element and many sporulation genes.</title>
        <authorList>
            <person name="Mizuno M."/>
            <person name="Masuda S."/>
            <person name="Takemaru K."/>
            <person name="Hosono S."/>
            <person name="Sato T."/>
            <person name="Takeuchi M."/>
            <person name="Kobayashi Y."/>
        </authorList>
    </citation>
    <scope>NUCLEOTIDE SEQUENCE [GENOMIC DNA]</scope>
    <source>
        <strain>168 / JH642</strain>
    </source>
</reference>
<reference key="2">
    <citation type="journal article" date="1997" name="Nature">
        <title>The complete genome sequence of the Gram-positive bacterium Bacillus subtilis.</title>
        <authorList>
            <person name="Kunst F."/>
            <person name="Ogasawara N."/>
            <person name="Moszer I."/>
            <person name="Albertini A.M."/>
            <person name="Alloni G."/>
            <person name="Azevedo V."/>
            <person name="Bertero M.G."/>
            <person name="Bessieres P."/>
            <person name="Bolotin A."/>
            <person name="Borchert S."/>
            <person name="Borriss R."/>
            <person name="Boursier L."/>
            <person name="Brans A."/>
            <person name="Braun M."/>
            <person name="Brignell S.C."/>
            <person name="Bron S."/>
            <person name="Brouillet S."/>
            <person name="Bruschi C.V."/>
            <person name="Caldwell B."/>
            <person name="Capuano V."/>
            <person name="Carter N.M."/>
            <person name="Choi S.-K."/>
            <person name="Codani J.-J."/>
            <person name="Connerton I.F."/>
            <person name="Cummings N.J."/>
            <person name="Daniel R.A."/>
            <person name="Denizot F."/>
            <person name="Devine K.M."/>
            <person name="Duesterhoeft A."/>
            <person name="Ehrlich S.D."/>
            <person name="Emmerson P.T."/>
            <person name="Entian K.-D."/>
            <person name="Errington J."/>
            <person name="Fabret C."/>
            <person name="Ferrari E."/>
            <person name="Foulger D."/>
            <person name="Fritz C."/>
            <person name="Fujita M."/>
            <person name="Fujita Y."/>
            <person name="Fuma S."/>
            <person name="Galizzi A."/>
            <person name="Galleron N."/>
            <person name="Ghim S.-Y."/>
            <person name="Glaser P."/>
            <person name="Goffeau A."/>
            <person name="Golightly E.J."/>
            <person name="Grandi G."/>
            <person name="Guiseppi G."/>
            <person name="Guy B.J."/>
            <person name="Haga K."/>
            <person name="Haiech J."/>
            <person name="Harwood C.R."/>
            <person name="Henaut A."/>
            <person name="Hilbert H."/>
            <person name="Holsappel S."/>
            <person name="Hosono S."/>
            <person name="Hullo M.-F."/>
            <person name="Itaya M."/>
            <person name="Jones L.-M."/>
            <person name="Joris B."/>
            <person name="Karamata D."/>
            <person name="Kasahara Y."/>
            <person name="Klaerr-Blanchard M."/>
            <person name="Klein C."/>
            <person name="Kobayashi Y."/>
            <person name="Koetter P."/>
            <person name="Koningstein G."/>
            <person name="Krogh S."/>
            <person name="Kumano M."/>
            <person name="Kurita K."/>
            <person name="Lapidus A."/>
            <person name="Lardinois S."/>
            <person name="Lauber J."/>
            <person name="Lazarevic V."/>
            <person name="Lee S.-M."/>
            <person name="Levine A."/>
            <person name="Liu H."/>
            <person name="Masuda S."/>
            <person name="Mauel C."/>
            <person name="Medigue C."/>
            <person name="Medina N."/>
            <person name="Mellado R.P."/>
            <person name="Mizuno M."/>
            <person name="Moestl D."/>
            <person name="Nakai S."/>
            <person name="Noback M."/>
            <person name="Noone D."/>
            <person name="O'Reilly M."/>
            <person name="Ogawa K."/>
            <person name="Ogiwara A."/>
            <person name="Oudega B."/>
            <person name="Park S.-H."/>
            <person name="Parro V."/>
            <person name="Pohl T.M."/>
            <person name="Portetelle D."/>
            <person name="Porwollik S."/>
            <person name="Prescott A.M."/>
            <person name="Presecan E."/>
            <person name="Pujic P."/>
            <person name="Purnelle B."/>
            <person name="Rapoport G."/>
            <person name="Rey M."/>
            <person name="Reynolds S."/>
            <person name="Rieger M."/>
            <person name="Rivolta C."/>
            <person name="Rocha E."/>
            <person name="Roche B."/>
            <person name="Rose M."/>
            <person name="Sadaie Y."/>
            <person name="Sato T."/>
            <person name="Scanlan E."/>
            <person name="Schleich S."/>
            <person name="Schroeter R."/>
            <person name="Scoffone F."/>
            <person name="Sekiguchi J."/>
            <person name="Sekowska A."/>
            <person name="Seror S.J."/>
            <person name="Serror P."/>
            <person name="Shin B.-S."/>
            <person name="Soldo B."/>
            <person name="Sorokin A."/>
            <person name="Tacconi E."/>
            <person name="Takagi T."/>
            <person name="Takahashi H."/>
            <person name="Takemaru K."/>
            <person name="Takeuchi M."/>
            <person name="Tamakoshi A."/>
            <person name="Tanaka T."/>
            <person name="Terpstra P."/>
            <person name="Tognoni A."/>
            <person name="Tosato V."/>
            <person name="Uchiyama S."/>
            <person name="Vandenbol M."/>
            <person name="Vannier F."/>
            <person name="Vassarotti A."/>
            <person name="Viari A."/>
            <person name="Wambutt R."/>
            <person name="Wedler E."/>
            <person name="Wedler H."/>
            <person name="Weitzenegger T."/>
            <person name="Winters P."/>
            <person name="Wipat A."/>
            <person name="Yamamoto H."/>
            <person name="Yamane K."/>
            <person name="Yasumoto K."/>
            <person name="Yata K."/>
            <person name="Yoshida K."/>
            <person name="Yoshikawa H.-F."/>
            <person name="Zumstein E."/>
            <person name="Yoshikawa H."/>
            <person name="Danchin A."/>
        </authorList>
    </citation>
    <scope>NUCLEOTIDE SEQUENCE [LARGE SCALE GENOMIC DNA]</scope>
    <source>
        <strain>168</strain>
    </source>
</reference>
<reference key="3">
    <citation type="journal article" date="2003" name="EMBO J.">
        <title>Endonucleolytic processing of CCA-less tRNA precursors by RNase Z in Bacillus subtilis.</title>
        <authorList>
            <person name="Pellegrini O."/>
            <person name="Nezzar J."/>
            <person name="Marchfelder A."/>
            <person name="Putzer H."/>
            <person name="Condon C."/>
        </authorList>
    </citation>
    <scope>FUNCTION</scope>
    <scope>CATALYTIC ACTIVITY</scope>
</reference>
<reference key="4">
    <citation type="journal article" date="2005" name="Nature">
        <title>Structural basis for substrate binding, cleavage and allostery in the tRNA maturase RNase Z.</title>
        <authorList>
            <person name="de la Sierra-Gallay I.L."/>
            <person name="Pellegrini O."/>
            <person name="Condon C."/>
        </authorList>
    </citation>
    <scope>X-RAY CRYSTALLOGRAPHY (2.1 ANGSTROMS) IN COMPLEX WITH ZINC IONS</scope>
    <scope>ACTIVE SITE</scope>
    <scope>ENZYME MECHANISM</scope>
    <scope>SUBUNIT</scope>
    <scope>COFACTOR</scope>
</reference>
<reference key="5">
    <citation type="journal article" date="2006" name="Nat. Struct. Mol. Biol.">
        <title>Structure of the ubiquitous 3' processing enzyme RNase Z bound to transfer RNA.</title>
        <authorList>
            <person name="Li de la Sierra-Gallay I."/>
            <person name="Mathy N."/>
            <person name="Pellegrini O."/>
            <person name="Condon C."/>
        </authorList>
    </citation>
    <scope>X-RAY CRYSTALLOGRAPHY (2.9 ANGSTROMS) IN COMPLEX WITH TRNA AND ZINC ION</scope>
    <scope>COFACTOR</scope>
</reference>
<organism>
    <name type="scientific">Bacillus subtilis (strain 168)</name>
    <dbReference type="NCBI Taxonomy" id="224308"/>
    <lineage>
        <taxon>Bacteria</taxon>
        <taxon>Bacillati</taxon>
        <taxon>Bacillota</taxon>
        <taxon>Bacilli</taxon>
        <taxon>Bacillales</taxon>
        <taxon>Bacillaceae</taxon>
        <taxon>Bacillus</taxon>
    </lineage>
</organism>
<evidence type="ECO:0000255" key="1">
    <source>
        <dbReference type="HAMAP-Rule" id="MF_01818"/>
    </source>
</evidence>
<evidence type="ECO:0000269" key="2">
    <source>
    </source>
</evidence>
<evidence type="ECO:0000269" key="3">
    <source>
    </source>
</evidence>
<evidence type="ECO:0000269" key="4">
    <source>
    </source>
</evidence>
<evidence type="ECO:0000305" key="5">
    <source>
    </source>
</evidence>
<evidence type="ECO:0007829" key="6">
    <source>
        <dbReference type="PDB" id="1Y44"/>
    </source>
</evidence>
<keyword id="KW-0002">3D-structure</keyword>
<keyword id="KW-0255">Endonuclease</keyword>
<keyword id="KW-0378">Hydrolase</keyword>
<keyword id="KW-0479">Metal-binding</keyword>
<keyword id="KW-0540">Nuclease</keyword>
<keyword id="KW-1185">Reference proteome</keyword>
<keyword id="KW-0819">tRNA processing</keyword>
<keyword id="KW-0862">Zinc</keyword>
<sequence>MELLFLGTGAGIPAKARNVTSVALKLLEERRSVWLFDCGEATQHQILHTTIKPRKIEKIFITHMHGDHVYGLPGLLGSRSFQGGEDELTVYGPKGIKAFIETSLAVTKTHLTYPLAIQEIEEGIVFEDDQFIVTAVSVIHGVEAFGYRVQEKDVPGSLKADVLKEMNIPPGPVYQKIKKGETVTLEDGRIINGNDFLEPPKKGRSVVFSGDTRVSDKLKELARDCDVLVHEATFAKEDRKLAYDYYHSTTEQAAVTAKEARAKQLILTHISARYQGDASLELQKEAVDVFPNSVAAYDFLEVNVPRG</sequence>
<accession>P54548</accession>
<protein>
    <recommendedName>
        <fullName evidence="1">Ribonuclease Z</fullName>
        <shortName evidence="1">RNase Z</shortName>
        <ecNumber evidence="1 2">3.1.26.11</ecNumber>
    </recommendedName>
    <alternativeName>
        <fullName evidence="1">tRNA 3 endonuclease</fullName>
    </alternativeName>
    <alternativeName>
        <fullName evidence="1">tRNase Z</fullName>
    </alternativeName>
</protein>